<feature type="transit peptide" description="Mitochondrion" evidence="5 24">
    <location>
        <begin position="1"/>
        <end position="27"/>
    </location>
</feature>
<feature type="chain" id="PRO_0000007411" description="Enoyl-CoA hydratase, mitochondrial">
    <location>
        <begin position="28"/>
        <end position="290"/>
    </location>
</feature>
<feature type="binding site">
    <location>
        <begin position="98"/>
        <end position="101"/>
    </location>
    <ligand>
        <name>substrate</name>
    </ligand>
</feature>
<feature type="binding site">
    <location>
        <position position="141"/>
    </location>
    <ligand>
        <name>substrate</name>
    </ligand>
</feature>
<feature type="site" description="Important for catalytic activity" evidence="1">
    <location>
        <position position="164"/>
    </location>
</feature>
<feature type="modified residue" description="Phosphothreonine" evidence="23">
    <location>
        <position position="46"/>
    </location>
</feature>
<feature type="modified residue" description="N6-acetyllysine; alternate" evidence="3">
    <location>
        <position position="101"/>
    </location>
</feature>
<feature type="modified residue" description="N6-succinyllysine; alternate" evidence="3">
    <location>
        <position position="101"/>
    </location>
</feature>
<feature type="modified residue" description="Phosphoserine" evidence="23">
    <location>
        <position position="114"/>
    </location>
</feature>
<feature type="modified residue" description="N6-acetyllysine; alternate" evidence="3">
    <location>
        <position position="115"/>
    </location>
</feature>
<feature type="modified residue" description="N6-succinyllysine; alternate" evidence="3">
    <location>
        <position position="115"/>
    </location>
</feature>
<feature type="modified residue" description="N6-acetyllysine" evidence="22">
    <location>
        <position position="118"/>
    </location>
</feature>
<feature type="modified residue" description="N6-succinyllysine" evidence="3">
    <location>
        <position position="204"/>
    </location>
</feature>
<feature type="modified residue" description="N6-acetyllysine" evidence="3">
    <location>
        <position position="211"/>
    </location>
</feature>
<feature type="sequence variant" id="VAR_073373" description="In ECHS1D; dbSNP:rs587776498." evidence="8">
    <original>A</original>
    <variation>V</variation>
    <location>
        <position position="2"/>
    </location>
</feature>
<feature type="sequence variant" id="VAR_022273" description="In dbSNP:rs10466126." evidence="13 14">
    <original>V</original>
    <variation>A</variation>
    <location>
        <position position="11"/>
    </location>
</feature>
<feature type="sequence variant" id="VAR_076185" description="In ECHS1D." evidence="9 11">
    <original>F</original>
    <variation>S</variation>
    <location>
        <position position="33"/>
    </location>
</feature>
<feature type="sequence variant" id="VAR_076186" description="In ECHS1D; dbSNP:rs375266808." evidence="9">
    <original>R</original>
    <variation>H</variation>
    <location>
        <position position="54"/>
    </location>
</feature>
<feature type="sequence variant" id="VAR_076187" description="In ECHS1D; decreases significantly enoyl-CoA hydratase activity; decreases significantly protein expression; dbSNP:rs201865375." evidence="9 10 11">
    <original>N</original>
    <variation>S</variation>
    <location>
        <position position="59"/>
    </location>
</feature>
<feature type="sequence variant" id="VAR_076188" description="In ECHS1D; dbSNP:rs371063211." evidence="9">
    <original>I</original>
    <variation>T</variation>
    <location>
        <position position="66"/>
    </location>
</feature>
<feature type="sequence variant" id="VAR_022274" description="In dbSNP:rs1049951." evidence="4 6 13 14 16">
    <original>T</original>
    <variation>I</variation>
    <location>
        <position position="75"/>
    </location>
</feature>
<feature type="sequence variant" id="VAR_076189" description="In ECHS1D; dbSNP:rs1426014295." evidence="9">
    <original>E</original>
    <variation>Q</variation>
    <location>
        <position position="77"/>
    </location>
</feature>
<feature type="sequence variant" id="VAR_076190" description="In ECHS1D; uncertain significance; dbSNP:rs1085307550." evidence="9">
    <original>G</original>
    <variation>R</variation>
    <location>
        <position position="90"/>
    </location>
</feature>
<feature type="sequence variant" id="VAR_076191" description="In ECHS1D; dbSNP:rs770931871." evidence="9">
    <original>A</original>
    <variation>T</variation>
    <location>
        <position position="132"/>
    </location>
</feature>
<feature type="sequence variant" id="VAR_076479" description="In ECHS1D; decreases enoyl-CoA hydratase activity of 70%; decreases significantly protein expression; dbSNP:rs864309656." evidence="10">
    <original>A</original>
    <variation>V</variation>
    <location>
        <position position="138"/>
    </location>
</feature>
<feature type="sequence variant" id="VAR_076192" description="In ECHS1D." evidence="9">
    <original>D</original>
    <variation>G</variation>
    <location>
        <position position="150"/>
    </location>
</feature>
<feature type="sequence variant" id="VAR_073374" description="In ECHS1D; dbSNP:rs786204001." evidence="7">
    <original>A</original>
    <variation>D</variation>
    <location>
        <position position="158"/>
    </location>
</feature>
<feature type="sequence variant" id="VAR_076193" description="In ECHS1D; dbSNP:rs375032130." evidence="9 11">
    <original>Q</original>
    <variation>R</variation>
    <location>
        <position position="159"/>
    </location>
</feature>
<feature type="sequence variant" id="VAR_076194" description="In ECHS1D; dbSNP:rs761989177." evidence="9">
    <original>G</original>
    <variation>S</variation>
    <location>
        <position position="195"/>
    </location>
</feature>
<feature type="sequence variant" id="VAR_076195" description="In ECHS1D; dbSNP:rs769429279." evidence="9">
    <original>C</original>
    <variation>R</variation>
    <location>
        <position position="225"/>
    </location>
</feature>
<feature type="sequence variant" id="VAR_076196" description="In ECHS1D; dbSNP:rs565090080." evidence="9">
    <original>K</original>
    <variation>E</variation>
    <location>
        <position position="273"/>
    </location>
</feature>
<feature type="sequence variant" id="VAR_076480" description="In ECHS1D; uncertain significance." evidence="12">
    <original>E</original>
    <variation>G</variation>
    <location>
        <position position="281"/>
    </location>
</feature>
<feature type="sequence conflict" description="In Ref. 1; BAA03001." evidence="19" ref="1">
    <original>A</original>
    <variation>G</variation>
    <location>
        <position position="84"/>
    </location>
</feature>
<feature type="sequence conflict" description="In Ref. 1; BAA03001." evidence="19" ref="1">
    <original>D</original>
    <variation>G</variation>
    <location>
        <position position="121"/>
    </location>
</feature>
<feature type="sequence conflict" description="In Ref. 1; BAA03001." evidence="19" ref="1">
    <original>A</original>
    <variation>P</variation>
    <location>
        <position position="138"/>
    </location>
</feature>
<feature type="sequence conflict" description="In Ref. 1; BAA03001." evidence="19" ref="1">
    <original>AM</original>
    <variation>EL</variation>
    <location>
        <begin position="188"/>
        <end position="189"/>
    </location>
</feature>
<feature type="sequence conflict" description="In Ref. 1; BAA03001." evidence="19" ref="1">
    <original>R</original>
    <variation>A</variation>
    <location>
        <position position="197"/>
    </location>
</feature>
<feature type="strand" evidence="25">
    <location>
        <begin position="34"/>
        <end position="42"/>
    </location>
</feature>
<feature type="helix" evidence="25">
    <location>
        <begin position="43"/>
        <end position="45"/>
    </location>
</feature>
<feature type="strand" evidence="25">
    <location>
        <begin position="47"/>
        <end position="52"/>
    </location>
</feature>
<feature type="helix" evidence="25">
    <location>
        <begin position="55"/>
        <end position="57"/>
    </location>
</feature>
<feature type="helix" evidence="25">
    <location>
        <begin position="63"/>
        <end position="78"/>
    </location>
</feature>
<feature type="strand" evidence="25">
    <location>
        <begin position="84"/>
        <end position="88"/>
    </location>
</feature>
<feature type="strand" evidence="25">
    <location>
        <begin position="91"/>
        <end position="95"/>
    </location>
</feature>
<feature type="helix" evidence="25">
    <location>
        <begin position="100"/>
        <end position="103"/>
    </location>
</feature>
<feature type="helix" evidence="25">
    <location>
        <begin position="108"/>
        <end position="113"/>
    </location>
</feature>
<feature type="turn" evidence="25">
    <location>
        <begin position="114"/>
        <end position="117"/>
    </location>
</feature>
<feature type="helix" evidence="25">
    <location>
        <begin position="119"/>
        <end position="125"/>
    </location>
</feature>
<feature type="strand" evidence="25">
    <location>
        <begin position="130"/>
        <end position="134"/>
    </location>
</feature>
<feature type="strand" evidence="25">
    <location>
        <begin position="136"/>
        <end position="139"/>
    </location>
</feature>
<feature type="helix" evidence="25">
    <location>
        <begin position="141"/>
        <end position="147"/>
    </location>
</feature>
<feature type="strand" evidence="25">
    <location>
        <begin position="149"/>
        <end position="155"/>
    </location>
</feature>
<feature type="strand" evidence="25">
    <location>
        <begin position="159"/>
        <end position="161"/>
    </location>
</feature>
<feature type="helix" evidence="25">
    <location>
        <begin position="163"/>
        <end position="167"/>
    </location>
</feature>
<feature type="strand" evidence="25">
    <location>
        <begin position="172"/>
        <end position="174"/>
    </location>
</feature>
<feature type="turn" evidence="25">
    <location>
        <begin position="175"/>
        <end position="177"/>
    </location>
</feature>
<feature type="helix" evidence="25">
    <location>
        <begin position="178"/>
        <end position="183"/>
    </location>
</feature>
<feature type="helix" evidence="25">
    <location>
        <begin position="185"/>
        <end position="194"/>
    </location>
</feature>
<feature type="helix" evidence="25">
    <location>
        <begin position="200"/>
        <end position="205"/>
    </location>
</feature>
<feature type="strand" evidence="25">
    <location>
        <begin position="210"/>
        <end position="213"/>
    </location>
</feature>
<feature type="turn" evidence="25">
    <location>
        <begin position="215"/>
        <end position="217"/>
    </location>
</feature>
<feature type="helix" evidence="25">
    <location>
        <begin position="218"/>
        <end position="231"/>
    </location>
</feature>
<feature type="helix" evidence="25">
    <location>
        <begin position="234"/>
        <end position="245"/>
    </location>
</feature>
<feature type="helix" evidence="25">
    <location>
        <begin position="246"/>
        <end position="248"/>
    </location>
</feature>
<feature type="helix" evidence="25">
    <location>
        <begin position="252"/>
        <end position="266"/>
    </location>
</feature>
<feature type="helix" evidence="25">
    <location>
        <begin position="270"/>
        <end position="280"/>
    </location>
</feature>
<accession>P30084</accession>
<accession>O00739</accession>
<accession>Q5VWY1</accession>
<accession>Q96H54</accession>
<sequence>MAALRVLLSCVRGPLRPPVRCPAWRPFASGANFEYIIAEKRGKNNTVGLIQLNRPKALNALCDGLIDELNQALKTFEEDPAVGAIVLTGGDKAFAAGADIKEMQNLSFQDCYSSKFLKHWDHLTQVKKPVIAAVNGYAFGGGCELAMMCDIIYAGEKAQFAQPEILIGTIPGAGGTQRLTRAVGKSLAMEMVLTGDRISAQDAKQAGLVSKICPVETLVEEAIQCAEKIASNSKIVVAMAKESVNAAFEMTLTEGSKLEKKLFYSTFATDDRKEGMTAFVEKRKANFKDQ</sequence>
<dbReference type="EC" id="4.2.1.17" evidence="10"/>
<dbReference type="EC" id="5.3.3.8" evidence="2"/>
<dbReference type="EMBL" id="D13900">
    <property type="protein sequence ID" value="BAA03001.1"/>
    <property type="molecule type" value="mRNA"/>
</dbReference>
<dbReference type="EMBL" id="X98126">
    <property type="protein sequence ID" value="CAA66808.1"/>
    <property type="molecule type" value="Genomic_DNA"/>
</dbReference>
<dbReference type="EMBL" id="X98127">
    <property type="protein sequence ID" value="CAA66808.1"/>
    <property type="status" value="JOINED"/>
    <property type="molecule type" value="Genomic_DNA"/>
</dbReference>
<dbReference type="EMBL" id="X98128">
    <property type="protein sequence ID" value="CAA66808.1"/>
    <property type="status" value="JOINED"/>
    <property type="molecule type" value="Genomic_DNA"/>
</dbReference>
<dbReference type="EMBL" id="X98129">
    <property type="protein sequence ID" value="CAA66808.1"/>
    <property type="status" value="JOINED"/>
    <property type="molecule type" value="Genomic_DNA"/>
</dbReference>
<dbReference type="EMBL" id="BT007123">
    <property type="protein sequence ID" value="AAP35787.1"/>
    <property type="molecule type" value="mRNA"/>
</dbReference>
<dbReference type="EMBL" id="AL360181">
    <property type="status" value="NOT_ANNOTATED_CDS"/>
    <property type="molecule type" value="Genomic_DNA"/>
</dbReference>
<dbReference type="EMBL" id="BC008906">
    <property type="protein sequence ID" value="AAH08906.1"/>
    <property type="molecule type" value="mRNA"/>
</dbReference>
<dbReference type="CCDS" id="CCDS7681.1"/>
<dbReference type="RefSeq" id="NP_004083.3">
    <property type="nucleotide sequence ID" value="NM_004092.3"/>
</dbReference>
<dbReference type="PDB" id="2HW5">
    <property type="method" value="X-ray"/>
    <property type="resolution" value="2.55 A"/>
    <property type="chains" value="A/B/C/D/E/F=28-290"/>
</dbReference>
<dbReference type="PDBsum" id="2HW5"/>
<dbReference type="SMR" id="P30084"/>
<dbReference type="BioGRID" id="108221">
    <property type="interactions" value="242"/>
</dbReference>
<dbReference type="FunCoup" id="P30084">
    <property type="interactions" value="1254"/>
</dbReference>
<dbReference type="IntAct" id="P30084">
    <property type="interactions" value="62"/>
</dbReference>
<dbReference type="MINT" id="P30084"/>
<dbReference type="STRING" id="9606.ENSP00000357535"/>
<dbReference type="ChEMBL" id="CHEMBL4523211"/>
<dbReference type="DrugBank" id="DB04117">
    <property type="generic name" value="4-(N,N-Dimethylamino)cinnamoyl-CoA"/>
</dbReference>
<dbReference type="DrugBank" id="DB03059">
    <property type="generic name" value="Acetoacetyl-CoA"/>
</dbReference>
<dbReference type="DrugBank" id="DB02563">
    <property type="generic name" value="Hexanoyl-CoA"/>
</dbReference>
<dbReference type="DrugBank" id="DB02910">
    <property type="generic name" value="Octanoyl-Coenzyme A"/>
</dbReference>
<dbReference type="DrugBank" id="DB09568">
    <property type="generic name" value="Omega-3-carboxylic acids"/>
</dbReference>
<dbReference type="SwissLipids" id="SLP:000001471"/>
<dbReference type="GlyGen" id="P30084">
    <property type="glycosylation" value="1 site, 1 O-linked glycan (1 site)"/>
</dbReference>
<dbReference type="iPTMnet" id="P30084"/>
<dbReference type="MetOSite" id="P30084"/>
<dbReference type="PhosphoSitePlus" id="P30084"/>
<dbReference type="SwissPalm" id="P30084"/>
<dbReference type="BioMuta" id="ECHS1"/>
<dbReference type="DMDM" id="62906863"/>
<dbReference type="REPRODUCTION-2DPAGE" id="IPI00024993"/>
<dbReference type="REPRODUCTION-2DPAGE" id="P30084"/>
<dbReference type="jPOST" id="P30084"/>
<dbReference type="MassIVE" id="P30084"/>
<dbReference type="PaxDb" id="9606-ENSP00000357535"/>
<dbReference type="PeptideAtlas" id="P30084"/>
<dbReference type="PRIDE" id="P30084"/>
<dbReference type="ProteomicsDB" id="54632"/>
<dbReference type="Pumba" id="P30084"/>
<dbReference type="TopDownProteomics" id="P30084"/>
<dbReference type="Antibodypedia" id="19426">
    <property type="antibodies" value="244 antibodies from 27 providers"/>
</dbReference>
<dbReference type="DNASU" id="1892"/>
<dbReference type="Ensembl" id="ENST00000368547.4">
    <property type="protein sequence ID" value="ENSP00000357535.3"/>
    <property type="gene ID" value="ENSG00000127884.5"/>
</dbReference>
<dbReference type="GeneID" id="1892"/>
<dbReference type="KEGG" id="hsa:1892"/>
<dbReference type="MANE-Select" id="ENST00000368547.4">
    <property type="protein sequence ID" value="ENSP00000357535.3"/>
    <property type="RefSeq nucleotide sequence ID" value="NM_004092.4"/>
    <property type="RefSeq protein sequence ID" value="NP_004083.3"/>
</dbReference>
<dbReference type="UCSC" id="uc001lmu.4">
    <property type="organism name" value="human"/>
</dbReference>
<dbReference type="AGR" id="HGNC:3151"/>
<dbReference type="CTD" id="1892"/>
<dbReference type="DisGeNET" id="1892"/>
<dbReference type="GeneCards" id="ECHS1"/>
<dbReference type="GeneReviews" id="ECHS1"/>
<dbReference type="HGNC" id="HGNC:3151">
    <property type="gene designation" value="ECHS1"/>
</dbReference>
<dbReference type="HPA" id="ENSG00000127884">
    <property type="expression patterns" value="Tissue enhanced (liver)"/>
</dbReference>
<dbReference type="MalaCards" id="ECHS1"/>
<dbReference type="MIM" id="602292">
    <property type="type" value="gene"/>
</dbReference>
<dbReference type="MIM" id="616277">
    <property type="type" value="phenotype"/>
</dbReference>
<dbReference type="neXtProt" id="NX_P30084"/>
<dbReference type="OpenTargets" id="ENSG00000127884"/>
<dbReference type="Orphanet" id="653880">
    <property type="disease" value="Mitochondrial short-chain enoyl-CoA hydratase 1 deficiency"/>
</dbReference>
<dbReference type="PharmGKB" id="PA27597"/>
<dbReference type="VEuPathDB" id="HostDB:ENSG00000127884"/>
<dbReference type="eggNOG" id="KOG1680">
    <property type="taxonomic scope" value="Eukaryota"/>
</dbReference>
<dbReference type="GeneTree" id="ENSGT00940000157609"/>
<dbReference type="HOGENOM" id="CLU_009834_7_6_1"/>
<dbReference type="InParanoid" id="P30084"/>
<dbReference type="OMA" id="FCDARED"/>
<dbReference type="OrthoDB" id="2018133at2759"/>
<dbReference type="PAN-GO" id="P30084">
    <property type="GO annotations" value="3 GO annotations based on evolutionary models"/>
</dbReference>
<dbReference type="PhylomeDB" id="P30084"/>
<dbReference type="TreeFam" id="TF314497"/>
<dbReference type="BioCyc" id="MetaCyc:HS05132-MONOMER"/>
<dbReference type="BRENDA" id="4.2.1.17">
    <property type="organism ID" value="2681"/>
</dbReference>
<dbReference type="PathwayCommons" id="P30084"/>
<dbReference type="Reactome" id="R-HSA-70895">
    <property type="pathway name" value="Branched-chain amino acid catabolism"/>
</dbReference>
<dbReference type="Reactome" id="R-HSA-77310">
    <property type="pathway name" value="Beta oxidation of lauroyl-CoA to decanoyl-CoA-CoA"/>
</dbReference>
<dbReference type="Reactome" id="R-HSA-77346">
    <property type="pathway name" value="Beta oxidation of decanoyl-CoA to octanoyl-CoA-CoA"/>
</dbReference>
<dbReference type="Reactome" id="R-HSA-77348">
    <property type="pathway name" value="Beta oxidation of octanoyl-CoA to hexanoyl-CoA"/>
</dbReference>
<dbReference type="Reactome" id="R-HSA-77350">
    <property type="pathway name" value="Beta oxidation of hexanoyl-CoA to butanoyl-CoA"/>
</dbReference>
<dbReference type="Reactome" id="R-HSA-77352">
    <property type="pathway name" value="Beta oxidation of butanoyl-CoA to acetyl-CoA"/>
</dbReference>
<dbReference type="Reactome" id="R-HSA-9916720">
    <property type="pathway name" value="Mitochondrial short-chain enoyl-CoA hydratase deficiency 1"/>
</dbReference>
<dbReference type="SABIO-RK" id="P30084"/>
<dbReference type="SignaLink" id="P30084"/>
<dbReference type="UniPathway" id="UPA00659"/>
<dbReference type="BioGRID-ORCS" id="1892">
    <property type="hits" value="31 hits in 1151 CRISPR screens"/>
</dbReference>
<dbReference type="ChiTaRS" id="ECHS1">
    <property type="organism name" value="human"/>
</dbReference>
<dbReference type="EvolutionaryTrace" id="P30084"/>
<dbReference type="GeneWiki" id="ECHS1"/>
<dbReference type="GenomeRNAi" id="1892"/>
<dbReference type="Pharos" id="P30084">
    <property type="development level" value="Tbio"/>
</dbReference>
<dbReference type="PRO" id="PR:P30084"/>
<dbReference type="Proteomes" id="UP000005640">
    <property type="component" value="Chromosome 10"/>
</dbReference>
<dbReference type="RNAct" id="P30084">
    <property type="molecule type" value="protein"/>
</dbReference>
<dbReference type="Bgee" id="ENSG00000127884">
    <property type="expression patterns" value="Expressed in right lobe of liver and 210 other cell types or tissues"/>
</dbReference>
<dbReference type="GO" id="GO:0005759">
    <property type="term" value="C:mitochondrial matrix"/>
    <property type="evidence" value="ECO:0000304"/>
    <property type="project" value="Reactome"/>
</dbReference>
<dbReference type="GO" id="GO:0005739">
    <property type="term" value="C:mitochondrion"/>
    <property type="evidence" value="ECO:0000314"/>
    <property type="project" value="HPA"/>
</dbReference>
<dbReference type="GO" id="GO:0043956">
    <property type="term" value="F:3-hydroxypropionyl-CoA dehydratase activity"/>
    <property type="evidence" value="ECO:0007669"/>
    <property type="project" value="RHEA"/>
</dbReference>
<dbReference type="GO" id="GO:0120092">
    <property type="term" value="F:crotonyl-CoA hydratase activity"/>
    <property type="evidence" value="ECO:0007669"/>
    <property type="project" value="RHEA"/>
</dbReference>
<dbReference type="GO" id="GO:0004165">
    <property type="term" value="F:delta(3)-delta(2)-enoyl-CoA isomerase activity"/>
    <property type="evidence" value="ECO:0007669"/>
    <property type="project" value="RHEA"/>
</dbReference>
<dbReference type="GO" id="GO:0004300">
    <property type="term" value="F:enoyl-CoA hydratase activity"/>
    <property type="evidence" value="ECO:0000314"/>
    <property type="project" value="UniProtKB"/>
</dbReference>
<dbReference type="GO" id="GO:0009083">
    <property type="term" value="P:branched-chain amino acid catabolic process"/>
    <property type="evidence" value="ECO:0000304"/>
    <property type="project" value="Reactome"/>
</dbReference>
<dbReference type="GO" id="GO:0006635">
    <property type="term" value="P:fatty acid beta-oxidation"/>
    <property type="evidence" value="ECO:0000314"/>
    <property type="project" value="UniProtKB"/>
</dbReference>
<dbReference type="CDD" id="cd06558">
    <property type="entry name" value="crotonase-like"/>
    <property type="match status" value="1"/>
</dbReference>
<dbReference type="FunFam" id="3.90.226.10:FF:000213">
    <property type="entry name" value="Enoyl-CoA hydratase, mitochondrial"/>
    <property type="match status" value="1"/>
</dbReference>
<dbReference type="FunFam" id="1.10.12.10:FF:000001">
    <property type="entry name" value="Probable enoyl-CoA hydratase, mitochondrial"/>
    <property type="match status" value="1"/>
</dbReference>
<dbReference type="Gene3D" id="3.90.226.10">
    <property type="entry name" value="2-enoyl-CoA Hydratase, Chain A, domain 1"/>
    <property type="match status" value="1"/>
</dbReference>
<dbReference type="Gene3D" id="1.10.12.10">
    <property type="entry name" value="Lyase 2-enoyl-coa Hydratase, Chain A, domain 2"/>
    <property type="match status" value="1"/>
</dbReference>
<dbReference type="InterPro" id="IPR029045">
    <property type="entry name" value="ClpP/crotonase-like_dom_sf"/>
</dbReference>
<dbReference type="InterPro" id="IPR018376">
    <property type="entry name" value="Enoyl-CoA_hyd/isom_CS"/>
</dbReference>
<dbReference type="InterPro" id="IPR001753">
    <property type="entry name" value="Enoyl-CoA_hydra/iso"/>
</dbReference>
<dbReference type="InterPro" id="IPR014748">
    <property type="entry name" value="Enoyl-CoA_hydra_C"/>
</dbReference>
<dbReference type="PANTHER" id="PTHR11941:SF54">
    <property type="entry name" value="ENOYL-COA HYDRATASE, MITOCHONDRIAL"/>
    <property type="match status" value="1"/>
</dbReference>
<dbReference type="PANTHER" id="PTHR11941">
    <property type="entry name" value="ENOYL-COA HYDRATASE-RELATED"/>
    <property type="match status" value="1"/>
</dbReference>
<dbReference type="Pfam" id="PF00378">
    <property type="entry name" value="ECH_1"/>
    <property type="match status" value="1"/>
</dbReference>
<dbReference type="SUPFAM" id="SSF52096">
    <property type="entry name" value="ClpP/crotonase"/>
    <property type="match status" value="1"/>
</dbReference>
<dbReference type="PROSITE" id="PS00166">
    <property type="entry name" value="ENOYL_COA_HYDRATASE"/>
    <property type="match status" value="1"/>
</dbReference>
<gene>
    <name evidence="21" type="primary">ECHS1</name>
</gene>
<keyword id="KW-0002">3D-structure</keyword>
<keyword id="KW-0007">Acetylation</keyword>
<keyword id="KW-0903">Direct protein sequencing</keyword>
<keyword id="KW-0225">Disease variant</keyword>
<keyword id="KW-0276">Fatty acid metabolism</keyword>
<keyword id="KW-0413">Isomerase</keyword>
<keyword id="KW-0443">Lipid metabolism</keyword>
<keyword id="KW-0456">Lyase</keyword>
<keyword id="KW-0496">Mitochondrion</keyword>
<keyword id="KW-0523">Neurodegeneration</keyword>
<keyword id="KW-0597">Phosphoprotein</keyword>
<keyword id="KW-1267">Proteomics identification</keyword>
<keyword id="KW-1185">Reference proteome</keyword>
<keyword id="KW-0809">Transit peptide</keyword>
<evidence type="ECO:0000250" key="1"/>
<evidence type="ECO:0000250" key="2">
    <source>
        <dbReference type="UniProtKB" id="P14604"/>
    </source>
</evidence>
<evidence type="ECO:0000250" key="3">
    <source>
        <dbReference type="UniProtKB" id="Q8BH95"/>
    </source>
</evidence>
<evidence type="ECO:0000269" key="4">
    <source>
    </source>
</evidence>
<evidence type="ECO:0000269" key="5">
    <source>
    </source>
</evidence>
<evidence type="ECO:0000269" key="6">
    <source>
    </source>
</evidence>
<evidence type="ECO:0000269" key="7">
    <source>
    </source>
</evidence>
<evidence type="ECO:0000269" key="8">
    <source>
    </source>
</evidence>
<evidence type="ECO:0000269" key="9">
    <source>
    </source>
</evidence>
<evidence type="ECO:0000269" key="10">
    <source>
    </source>
</evidence>
<evidence type="ECO:0000269" key="11">
    <source>
    </source>
</evidence>
<evidence type="ECO:0000269" key="12">
    <source>
    </source>
</evidence>
<evidence type="ECO:0000269" key="13">
    <source>
    </source>
</evidence>
<evidence type="ECO:0000269" key="14">
    <source>
    </source>
</evidence>
<evidence type="ECO:0000269" key="15">
    <source ref="15"/>
</evidence>
<evidence type="ECO:0000269" key="16">
    <source ref="3"/>
</evidence>
<evidence type="ECO:0000303" key="17">
    <source>
    </source>
</evidence>
<evidence type="ECO:0000303" key="18">
    <source>
    </source>
</evidence>
<evidence type="ECO:0000305" key="19"/>
<evidence type="ECO:0000305" key="20">
    <source>
    </source>
</evidence>
<evidence type="ECO:0000312" key="21">
    <source>
        <dbReference type="HGNC" id="HGNC:3151"/>
    </source>
</evidence>
<evidence type="ECO:0007744" key="22">
    <source>
    </source>
</evidence>
<evidence type="ECO:0007744" key="23">
    <source>
    </source>
</evidence>
<evidence type="ECO:0007744" key="24">
    <source>
    </source>
</evidence>
<evidence type="ECO:0007829" key="25">
    <source>
        <dbReference type="PDB" id="2HW5"/>
    </source>
</evidence>
<name>ECHM_HUMAN</name>
<organism>
    <name type="scientific">Homo sapiens</name>
    <name type="common">Human</name>
    <dbReference type="NCBI Taxonomy" id="9606"/>
    <lineage>
        <taxon>Eukaryota</taxon>
        <taxon>Metazoa</taxon>
        <taxon>Chordata</taxon>
        <taxon>Craniata</taxon>
        <taxon>Vertebrata</taxon>
        <taxon>Euteleostomi</taxon>
        <taxon>Mammalia</taxon>
        <taxon>Eutheria</taxon>
        <taxon>Euarchontoglires</taxon>
        <taxon>Primates</taxon>
        <taxon>Haplorrhini</taxon>
        <taxon>Catarrhini</taxon>
        <taxon>Hominidae</taxon>
        <taxon>Homo</taxon>
    </lineage>
</organism>
<reference key="1">
    <citation type="journal article" date="1993" name="Enzyme Protein">
        <title>Molecular cloning and sequence analysis of the cDNA for human mitochondrial short-chain enoyl-CoA hydratase.</title>
        <authorList>
            <person name="Kanazawa M."/>
            <person name="Ohtake A."/>
            <person name="Abe H."/>
            <person name="Yamamoto S."/>
            <person name="Satoh Y."/>
            <person name="Takayanagi M."/>
            <person name="Niimi H."/>
            <person name="Mori M."/>
            <person name="Hashimoto T."/>
        </authorList>
    </citation>
    <scope>NUCLEOTIDE SEQUENCE [MRNA]</scope>
    <scope>VARIANTS ALA-11 AND ILE-75</scope>
    <source>
        <tissue>Liver</tissue>
    </source>
</reference>
<reference key="2">
    <citation type="journal article" date="1997" name="Genomics">
        <title>Human mitochondrial enoyl-CoA hydratase gene (ECHS1): structural organization and assignment to chromosome 10q26.2-q26.3.</title>
        <authorList>
            <person name="Janssen U."/>
            <person name="Davis E.M."/>
            <person name="le Beau M.M."/>
            <person name="Stoffel W."/>
        </authorList>
    </citation>
    <scope>NUCLEOTIDE SEQUENCE [GENOMIC DNA]</scope>
    <scope>VARIANTS ALA-11 AND ILE-75</scope>
</reference>
<reference key="3">
    <citation type="submission" date="2003-05" db="EMBL/GenBank/DDBJ databases">
        <title>Cloning of human full-length CDSs in BD Creator(TM) system donor vector.</title>
        <authorList>
            <person name="Kalnine N."/>
            <person name="Chen X."/>
            <person name="Rolfs A."/>
            <person name="Halleck A."/>
            <person name="Hines L."/>
            <person name="Eisenstein S."/>
            <person name="Koundinya M."/>
            <person name="Raphael J."/>
            <person name="Moreira D."/>
            <person name="Kelley T."/>
            <person name="LaBaer J."/>
            <person name="Lin Y."/>
            <person name="Phelan M."/>
            <person name="Farmer A."/>
        </authorList>
    </citation>
    <scope>NUCLEOTIDE SEQUENCE [LARGE SCALE MRNA]</scope>
    <scope>VARIANT ILE-75</scope>
</reference>
<reference key="4">
    <citation type="journal article" date="2004" name="Nature">
        <title>The DNA sequence and comparative analysis of human chromosome 10.</title>
        <authorList>
            <person name="Deloukas P."/>
            <person name="Earthrowl M.E."/>
            <person name="Grafham D.V."/>
            <person name="Rubenfield M."/>
            <person name="French L."/>
            <person name="Steward C.A."/>
            <person name="Sims S.K."/>
            <person name="Jones M.C."/>
            <person name="Searle S."/>
            <person name="Scott C."/>
            <person name="Howe K."/>
            <person name="Hunt S.E."/>
            <person name="Andrews T.D."/>
            <person name="Gilbert J.G.R."/>
            <person name="Swarbreck D."/>
            <person name="Ashurst J.L."/>
            <person name="Taylor A."/>
            <person name="Battles J."/>
            <person name="Bird C.P."/>
            <person name="Ainscough R."/>
            <person name="Almeida J.P."/>
            <person name="Ashwell R.I.S."/>
            <person name="Ambrose K.D."/>
            <person name="Babbage A.K."/>
            <person name="Bagguley C.L."/>
            <person name="Bailey J."/>
            <person name="Banerjee R."/>
            <person name="Bates K."/>
            <person name="Beasley H."/>
            <person name="Bray-Allen S."/>
            <person name="Brown A.J."/>
            <person name="Brown J.Y."/>
            <person name="Burford D.C."/>
            <person name="Burrill W."/>
            <person name="Burton J."/>
            <person name="Cahill P."/>
            <person name="Camire D."/>
            <person name="Carter N.P."/>
            <person name="Chapman J.C."/>
            <person name="Clark S.Y."/>
            <person name="Clarke G."/>
            <person name="Clee C.M."/>
            <person name="Clegg S."/>
            <person name="Corby N."/>
            <person name="Coulson A."/>
            <person name="Dhami P."/>
            <person name="Dutta I."/>
            <person name="Dunn M."/>
            <person name="Faulkner L."/>
            <person name="Frankish A."/>
            <person name="Frankland J.A."/>
            <person name="Garner P."/>
            <person name="Garnett J."/>
            <person name="Gribble S."/>
            <person name="Griffiths C."/>
            <person name="Grocock R."/>
            <person name="Gustafson E."/>
            <person name="Hammond S."/>
            <person name="Harley J.L."/>
            <person name="Hart E."/>
            <person name="Heath P.D."/>
            <person name="Ho T.P."/>
            <person name="Hopkins B."/>
            <person name="Horne J."/>
            <person name="Howden P.J."/>
            <person name="Huckle E."/>
            <person name="Hynds C."/>
            <person name="Johnson C."/>
            <person name="Johnson D."/>
            <person name="Kana A."/>
            <person name="Kay M."/>
            <person name="Kimberley A.M."/>
            <person name="Kershaw J.K."/>
            <person name="Kokkinaki M."/>
            <person name="Laird G.K."/>
            <person name="Lawlor S."/>
            <person name="Lee H.M."/>
            <person name="Leongamornlert D.A."/>
            <person name="Laird G."/>
            <person name="Lloyd C."/>
            <person name="Lloyd D.M."/>
            <person name="Loveland J."/>
            <person name="Lovell J."/>
            <person name="McLaren S."/>
            <person name="McLay K.E."/>
            <person name="McMurray A."/>
            <person name="Mashreghi-Mohammadi M."/>
            <person name="Matthews L."/>
            <person name="Milne S."/>
            <person name="Nickerson T."/>
            <person name="Nguyen M."/>
            <person name="Overton-Larty E."/>
            <person name="Palmer S.A."/>
            <person name="Pearce A.V."/>
            <person name="Peck A.I."/>
            <person name="Pelan S."/>
            <person name="Phillimore B."/>
            <person name="Porter K."/>
            <person name="Rice C.M."/>
            <person name="Rogosin A."/>
            <person name="Ross M.T."/>
            <person name="Sarafidou T."/>
            <person name="Sehra H.K."/>
            <person name="Shownkeen R."/>
            <person name="Skuce C.D."/>
            <person name="Smith M."/>
            <person name="Standring L."/>
            <person name="Sycamore N."/>
            <person name="Tester J."/>
            <person name="Thorpe A."/>
            <person name="Torcasso W."/>
            <person name="Tracey A."/>
            <person name="Tromans A."/>
            <person name="Tsolas J."/>
            <person name="Wall M."/>
            <person name="Walsh J."/>
            <person name="Wang H."/>
            <person name="Weinstock K."/>
            <person name="West A.P."/>
            <person name="Willey D.L."/>
            <person name="Whitehead S.L."/>
            <person name="Wilming L."/>
            <person name="Wray P.W."/>
            <person name="Young L."/>
            <person name="Chen Y."/>
            <person name="Lovering R.C."/>
            <person name="Moschonas N.K."/>
            <person name="Siebert R."/>
            <person name="Fechtel K."/>
            <person name="Bentley D."/>
            <person name="Durbin R.M."/>
            <person name="Hubbard T."/>
            <person name="Doucette-Stamm L."/>
            <person name="Beck S."/>
            <person name="Smith D.R."/>
            <person name="Rogers J."/>
        </authorList>
    </citation>
    <scope>NUCLEOTIDE SEQUENCE [LARGE SCALE GENOMIC DNA]</scope>
</reference>
<reference key="5">
    <citation type="journal article" date="2004" name="Genome Res.">
        <title>The status, quality, and expansion of the NIH full-length cDNA project: the Mammalian Gene Collection (MGC).</title>
        <authorList>
            <consortium name="The MGC Project Team"/>
        </authorList>
    </citation>
    <scope>NUCLEOTIDE SEQUENCE [LARGE SCALE MRNA]</scope>
    <scope>VARIANT ILE-75</scope>
    <source>
        <tissue>Placenta</tissue>
    </source>
</reference>
<reference key="6">
    <citation type="journal article" date="1992" name="Electrophoresis">
        <title>Human liver protein map: a reference database established by microsequencing and gel comparison.</title>
        <authorList>
            <person name="Hochstrasser D.F."/>
            <person name="Frutiger S."/>
            <person name="Paquet N."/>
            <person name="Bairoch A."/>
            <person name="Ravier F."/>
            <person name="Pasquali C."/>
            <person name="Sanchez J.-C."/>
            <person name="Tissot J.-D."/>
            <person name="Bjellqvist B."/>
            <person name="Vargas R."/>
            <person name="Appel R.D."/>
            <person name="Hughes G.J."/>
        </authorList>
    </citation>
    <scope>PROTEIN SEQUENCE OF 28-37</scope>
    <source>
        <tissue>Liver</tissue>
    </source>
</reference>
<reference key="7">
    <citation type="submission" date="2008-12" db="UniProtKB">
        <authorList>
            <person name="Lubec G."/>
            <person name="Vishwanath V."/>
            <person name="Chen W.-Q."/>
            <person name="Sun Y."/>
        </authorList>
    </citation>
    <scope>PROTEIN SEQUENCE OF 44-56; 102-115; 158-178; 186-197; 242-257 AND 262-273</scope>
    <scope>IDENTIFICATION BY MASS SPECTROMETRY</scope>
    <source>
        <tissue>Brain</tissue>
        <tissue>Cajal-Retzius cell</tissue>
        <tissue>Fetal brain cortex</tissue>
    </source>
</reference>
<reference key="8">
    <citation type="journal article" date="2000" name="Electrophoresis">
        <title>Human ERp29: isolation, primary structural characterisation and two-dimensional gel mapping.</title>
        <authorList>
            <person name="Hubbard M.J."/>
            <person name="McHugh N.J."/>
        </authorList>
    </citation>
    <scope>PROTEIN SEQUENCE OF 57-63; 75-92 AND 158-178</scope>
    <scope>VARIANT ILE-75</scope>
    <scope>IDENTIFICATION BY MASS SPECTROMETRY</scope>
    <source>
        <tissue>Liver</tissue>
    </source>
</reference>
<reference key="9">
    <citation type="journal article" date="2009" name="Science">
        <title>Lysine acetylation targets protein complexes and co-regulates major cellular functions.</title>
        <authorList>
            <person name="Choudhary C."/>
            <person name="Kumar C."/>
            <person name="Gnad F."/>
            <person name="Nielsen M.L."/>
            <person name="Rehman M."/>
            <person name="Walther T.C."/>
            <person name="Olsen J.V."/>
            <person name="Mann M."/>
        </authorList>
    </citation>
    <scope>ACETYLATION [LARGE SCALE ANALYSIS] AT LYS-118</scope>
    <scope>IDENTIFICATION BY MASS SPECTROMETRY [LARGE SCALE ANALYSIS]</scope>
</reference>
<reference key="10">
    <citation type="journal article" date="2011" name="BMC Syst. Biol.">
        <title>Initial characterization of the human central proteome.</title>
        <authorList>
            <person name="Burkard T.R."/>
            <person name="Planyavsky M."/>
            <person name="Kaupe I."/>
            <person name="Breitwieser F.P."/>
            <person name="Buerckstuemmer T."/>
            <person name="Bennett K.L."/>
            <person name="Superti-Furga G."/>
            <person name="Colinge J."/>
        </authorList>
    </citation>
    <scope>IDENTIFICATION BY MASS SPECTROMETRY [LARGE SCALE ANALYSIS]</scope>
</reference>
<reference key="11">
    <citation type="journal article" date="2014" name="Brain">
        <title>ECHS1 mutations in Leigh disease: a new inborn error of metabolism affecting valine metabolism.</title>
        <authorList>
            <person name="Peters H."/>
            <person name="Buck N."/>
            <person name="Wanders R."/>
            <person name="Ruiter J."/>
            <person name="Waterham H."/>
            <person name="Koster J."/>
            <person name="Yaplito-Lee J."/>
            <person name="Ferdinandusse S."/>
            <person name="Pitt J."/>
        </authorList>
    </citation>
    <scope>INVOLVEMENT IN ECHS1D</scope>
    <scope>VARIANT ECHS1D ASP-158</scope>
    <scope>PATHWAY</scope>
</reference>
<reference key="12">
    <citation type="journal article" date="2014" name="J. Proteomics">
        <title>An enzyme assisted RP-RPLC approach for in-depth analysis of human liver phosphoproteome.</title>
        <authorList>
            <person name="Bian Y."/>
            <person name="Song C."/>
            <person name="Cheng K."/>
            <person name="Dong M."/>
            <person name="Wang F."/>
            <person name="Huang J."/>
            <person name="Sun D."/>
            <person name="Wang L."/>
            <person name="Ye M."/>
            <person name="Zou H."/>
        </authorList>
    </citation>
    <scope>PHOSPHORYLATION [LARGE SCALE ANALYSIS] AT THR-46 AND SER-114</scope>
    <scope>IDENTIFICATION BY MASS SPECTROMETRY [LARGE SCALE ANALYSIS]</scope>
    <source>
        <tissue>Liver</tissue>
    </source>
</reference>
<reference key="13">
    <citation type="journal article" date="2015" name="Hum. Mutat.">
        <title>ECHS1 mutations cause combined respiratory chain deficiency resulting in Leigh syndrome.</title>
        <authorList>
            <person name="Sakai C."/>
            <person name="Yamaguchi S."/>
            <person name="Sasaki M."/>
            <person name="Miyamoto Y."/>
            <person name="Matsushima Y."/>
            <person name="Goto Y."/>
        </authorList>
    </citation>
    <scope>INVOLVEMENT IN ECHS1D</scope>
    <scope>VARIANT ECHS1D VAL-2</scope>
</reference>
<reference key="14">
    <citation type="journal article" date="2015" name="Proteomics">
        <title>N-terminome analysis of the human mitochondrial proteome.</title>
        <authorList>
            <person name="Vaca Jacome A.S."/>
            <person name="Rabilloud T."/>
            <person name="Schaeffer-Reiss C."/>
            <person name="Rompais M."/>
            <person name="Ayoub D."/>
            <person name="Lane L."/>
            <person name="Bairoch A."/>
            <person name="Van Dorsselaer A."/>
            <person name="Carapito C."/>
        </authorList>
    </citation>
    <scope>CLEAVAGE OF TRANSIT PEPTIDE [LARGE SCALE ANALYSIS] AFTER PHE-27</scope>
    <scope>IDENTIFICATION BY MASS SPECTROMETRY [LARGE SCALE ANALYSIS]</scope>
</reference>
<reference key="15">
    <citation type="submission" date="2006-08" db="PDB data bank">
        <title>The crystal structure of human enoyl-coenzyme A (CoA) hydratase short chain 1, ECHS1.</title>
        <authorList>
            <consortium name="Structural genomics consortium (SGC)"/>
        </authorList>
    </citation>
    <scope>X-RAY CRYSTALLOGRAPHY (2.55 ANGSTROMS) OF 24-290 IN COMPLEX WITH CROTONYL COENZYME A</scope>
    <scope>SUBUNIT</scope>
</reference>
<reference key="16">
    <citation type="journal article" date="2015" name="Ann. Clin. Transl. Neurol.">
        <title>Deficiency of ECHS1 causes mitochondrial encephalopathy with cardiac involvement.</title>
        <authorList>
            <person name="Haack T.B."/>
            <person name="Jackson C.B."/>
            <person name="Murayama K."/>
            <person name="Kremer L.S."/>
            <person name="Schaller A."/>
            <person name="Kotzaeridou U."/>
            <person name="de Vries M.C."/>
            <person name="Schottmann G."/>
            <person name="Santra S."/>
            <person name="Buechner B."/>
            <person name="Wieland T."/>
            <person name="Graf E."/>
            <person name="Freisinger P."/>
            <person name="Eggimann S."/>
            <person name="Ohtake A."/>
            <person name="Okazaki Y."/>
            <person name="Kohda M."/>
            <person name="Kishita Y."/>
            <person name="Tokuzawa Y."/>
            <person name="Sauer S."/>
            <person name="Memari Y."/>
            <person name="Kolb-Kokocinski A."/>
            <person name="Durbin R."/>
            <person name="Hasselmann O."/>
            <person name="Cremer K."/>
            <person name="Albrecht B."/>
            <person name="Wieczorek D."/>
            <person name="Engels H."/>
            <person name="Hahn D."/>
            <person name="Zink A.M."/>
            <person name="Alston C.L."/>
            <person name="Taylor R.W."/>
            <person name="Rodenburg R.J."/>
            <person name="Trollmann R."/>
            <person name="Sperl W."/>
            <person name="Strom T.M."/>
            <person name="Hoffmann G.F."/>
            <person name="Mayr J.A."/>
            <person name="Meitinger T."/>
            <person name="Bolognini R."/>
            <person name="Schuelke M."/>
            <person name="Nuoffer J.M."/>
            <person name="Koelker S."/>
            <person name="Prokisch H."/>
            <person name="Klopstock T."/>
        </authorList>
    </citation>
    <scope>VARIANTS ECHS1D SER-33; HIS-54; SER-59; THR-66; GLN-77; ARG-90; THR-132; GLY-150; ARG-159; SER-195; ARG-225 AND GLU-273</scope>
</reference>
<reference key="17">
    <citation type="journal article" date="2015" name="J. Med. Genet.">
        <title>Clinical, biochemical and metabolic characterisation of a mild form of human short-chain enoyl-CoA hydratase deficiency: significance of increased N-acetyl-S-(2-carboxypropyl)cysteine excretion.</title>
        <authorList>
            <person name="Yamada K."/>
            <person name="Aiba K."/>
            <person name="Kitaura Y."/>
            <person name="Kondo Y."/>
            <person name="Nomura N."/>
            <person name="Nakamura Y."/>
            <person name="Fukushi D."/>
            <person name="Murayama K."/>
            <person name="Shimomura Y."/>
            <person name="Pitt J."/>
            <person name="Yamaguchi S."/>
            <person name="Yokochi K."/>
            <person name="Wakamatsu N."/>
        </authorList>
    </citation>
    <scope>VARIANTS ECHS1D SER-59 AND VAL-138</scope>
    <scope>FUNCTION</scope>
    <scope>BIOPHYSICOCHEMICAL PROPERTIES</scope>
    <scope>CATALYTIC ACTIVITY</scope>
    <scope>PATHWAY</scope>
</reference>
<reference key="18">
    <citation type="journal article" date="2016" name="Metab. Brain Dis.">
        <title>Novel ECHS1 mutation in an Emirati neonate with severe metabolic acidosis.</title>
        <authorList>
            <person name="Nair P."/>
            <person name="Hamzeh A.R."/>
            <person name="Mohamed M."/>
            <person name="Malik E.M."/>
            <person name="Al-Ali M.T."/>
            <person name="Bastaki F."/>
        </authorList>
    </citation>
    <scope>VARIANT ECHS1D GLY-281</scope>
</reference>
<reference key="19">
    <citation type="journal article" date="2016" name="PLoS Genet.">
        <title>A comprehensive genomic analysis reveals the genetic landscape of mitochondrial respiratory chain complex deficiencies.</title>
        <authorList>
            <person name="Kohda M."/>
            <person name="Tokuzawa Y."/>
            <person name="Kishita Y."/>
            <person name="Nyuzuki H."/>
            <person name="Moriyama Y."/>
            <person name="Mizuno Y."/>
            <person name="Hirata T."/>
            <person name="Yatsuka Y."/>
            <person name="Yamashita-Sugahara Y."/>
            <person name="Nakachi Y."/>
            <person name="Kato H."/>
            <person name="Okuda A."/>
            <person name="Tamaru S."/>
            <person name="Borna N.N."/>
            <person name="Banshoya K."/>
            <person name="Aigaki T."/>
            <person name="Sato-Miyata Y."/>
            <person name="Ohnuma K."/>
            <person name="Suzuki T."/>
            <person name="Nagao A."/>
            <person name="Maehata H."/>
            <person name="Matsuda F."/>
            <person name="Higasa K."/>
            <person name="Nagasaki M."/>
            <person name="Yasuda J."/>
            <person name="Yamamoto M."/>
            <person name="Fushimi T."/>
            <person name="Shimura M."/>
            <person name="Kaiho-Ichimoto K."/>
            <person name="Harashima H."/>
            <person name="Yamazaki T."/>
            <person name="Mori M."/>
            <person name="Murayama K."/>
            <person name="Ohtake A."/>
            <person name="Okazaki Y."/>
        </authorList>
    </citation>
    <scope>VARIANTS ECHS1D SER-33; SER-59 AND ARG-159</scope>
</reference>
<protein>
    <recommendedName>
        <fullName evidence="19">Enoyl-CoA hydratase, mitochondrial</fullName>
        <shortName>mECH</shortName>
        <shortName>mECH1</shortName>
        <ecNumber evidence="10">4.2.1.17</ecNumber>
        <ecNumber evidence="2">5.3.3.8</ecNumber>
    </recommendedName>
    <alternativeName>
        <fullName>Enoyl-CoA hydratase 1</fullName>
        <shortName evidence="17 18">ECHS1</shortName>
    </alternativeName>
    <alternativeName>
        <fullName evidence="17">Short-chain enoyl-CoA hydratase</fullName>
        <shortName>SCEH</shortName>
    </alternativeName>
</protein>
<proteinExistence type="evidence at protein level"/>
<comment type="function">
    <text evidence="2 7 10">Converts unsaturated trans-2-enoyl-CoA species ((2E)-enoyl-CoA) to the corresponding (3S)-3hydroxyacyl-CoA species through addition of a water molecule to the double bond (PubMed:25125611, PubMed:26251176). Catalyzes the hydration of medium- and short-chained fatty enoyl-CoA thioesters from 4 carbons long (C4) up to C16 (PubMed:26251176). Has high substrate specificity for crotonyl-CoA ((2E)-butenoyl-CoA) and moderate specificity for acryloyl-CoA, 3-methylcrotonyl-CoA (3-methyl-(2E)-butenoyl-CoA) and methacrylyl-CoA ((2E)-2-methylpropenoyl-CoA) (PubMed:26251176). Can bind tiglyl-CoA (2-methylcrotonoyl-CoA), but hydrates only a small amount of this substrate (PubMed:26251176). Plays a key role in the beta-oxidation spiral of short- and medium-chain fatty acid oxidation (PubMed:25125611, PubMed:26251176). At a lower rate than the hydratase reaction, catalyzes the isomerase reaction of trans-3-enoyl-CoA species (such as (3E)-hexenoyl-CoA) to trans-2-enoyl-CoA species (such as (2E)-hexenoyl-CoA), which are subsequently hydrated to 3(S)-3-hydroxyacyl-CoA species (such as (3S)-hydroxyhexanoyl-CoA) (By similarity).</text>
</comment>
<comment type="catalytic activity">
    <reaction evidence="10">
        <text>a (3S)-3-hydroxyacyl-CoA = a (2E)-enoyl-CoA + H2O</text>
        <dbReference type="Rhea" id="RHEA:16105"/>
        <dbReference type="ChEBI" id="CHEBI:15377"/>
        <dbReference type="ChEBI" id="CHEBI:57318"/>
        <dbReference type="ChEBI" id="CHEBI:58856"/>
        <dbReference type="EC" id="4.2.1.17"/>
    </reaction>
    <physiologicalReaction direction="right-to-left" evidence="20">
        <dbReference type="Rhea" id="RHEA:16107"/>
    </physiologicalReaction>
</comment>
<comment type="catalytic activity">
    <reaction evidence="2">
        <text>a (3E)-enoyl-CoA = a 4-saturated (2E)-enoyl-CoA</text>
        <dbReference type="Rhea" id="RHEA:45228"/>
        <dbReference type="ChEBI" id="CHEBI:58521"/>
        <dbReference type="ChEBI" id="CHEBI:85097"/>
        <dbReference type="EC" id="5.3.3.8"/>
    </reaction>
    <physiologicalReaction direction="left-to-right" evidence="2">
        <dbReference type="Rhea" id="RHEA:45229"/>
    </physiologicalReaction>
</comment>
<comment type="catalytic activity">
    <reaction evidence="2">
        <text>(3E)-hexenoyl-CoA = (2E)-hexenoyl-CoA</text>
        <dbReference type="Rhea" id="RHEA:45736"/>
        <dbReference type="ChEBI" id="CHEBI:62077"/>
        <dbReference type="ChEBI" id="CHEBI:84790"/>
    </reaction>
    <physiologicalReaction direction="left-to-right" evidence="2">
        <dbReference type="Rhea" id="RHEA:45737"/>
    </physiologicalReaction>
</comment>
<comment type="catalytic activity">
    <reaction evidence="10">
        <text>(3S)-3-hydroxybutanoyl-CoA = (2E)-butenoyl-CoA + H2O</text>
        <dbReference type="Rhea" id="RHEA:26558"/>
        <dbReference type="ChEBI" id="CHEBI:15377"/>
        <dbReference type="ChEBI" id="CHEBI:57316"/>
        <dbReference type="ChEBI" id="CHEBI:57332"/>
    </reaction>
    <physiologicalReaction direction="right-to-left" evidence="20">
        <dbReference type="Rhea" id="RHEA:26560"/>
    </physiologicalReaction>
</comment>
<comment type="catalytic activity">
    <reaction evidence="10">
        <text>3-hydroxyisovaleryl-CoA = 3-methylbut-2-enoyl-CoA + H2O</text>
        <dbReference type="Rhea" id="RHEA:31079"/>
        <dbReference type="ChEBI" id="CHEBI:15377"/>
        <dbReference type="ChEBI" id="CHEBI:57344"/>
        <dbReference type="ChEBI" id="CHEBI:62555"/>
    </reaction>
    <physiologicalReaction direction="right-to-left" evidence="20">
        <dbReference type="Rhea" id="RHEA:31081"/>
    </physiologicalReaction>
</comment>
<comment type="catalytic activity">
    <reaction evidence="10">
        <text>3-hydroxypropanoyl-CoA = acryloyl-CoA + H2O</text>
        <dbReference type="Rhea" id="RHEA:26518"/>
        <dbReference type="ChEBI" id="CHEBI:15377"/>
        <dbReference type="ChEBI" id="CHEBI:57367"/>
        <dbReference type="ChEBI" id="CHEBI:58528"/>
    </reaction>
    <physiologicalReaction direction="right-to-left" evidence="20">
        <dbReference type="Rhea" id="RHEA:26520"/>
    </physiologicalReaction>
</comment>
<comment type="catalytic activity">
    <reaction evidence="10">
        <text>3-hydroxybutanoyl-CoA = (2E)-butenoyl-CoA + H2O</text>
        <dbReference type="Rhea" id="RHEA:45584"/>
        <dbReference type="ChEBI" id="CHEBI:15377"/>
        <dbReference type="ChEBI" id="CHEBI:57332"/>
        <dbReference type="ChEBI" id="CHEBI:78611"/>
    </reaction>
    <physiologicalReaction direction="right-to-left" evidence="20">
        <dbReference type="Rhea" id="RHEA:45586"/>
    </physiologicalReaction>
</comment>
<comment type="catalytic activity">
    <reaction evidence="10">
        <text>2-methylpropenoyl-CoA + H2O = (S)-3-hydroxyisobutanoyl-CoA</text>
        <dbReference type="Rhea" id="RHEA:31175"/>
        <dbReference type="ChEBI" id="CHEBI:15377"/>
        <dbReference type="ChEBI" id="CHEBI:62500"/>
        <dbReference type="ChEBI" id="CHEBI:62611"/>
    </reaction>
    <physiologicalReaction direction="left-to-right" evidence="20">
        <dbReference type="Rhea" id="RHEA:31176"/>
    </physiologicalReaction>
</comment>
<comment type="catalytic activity">
    <reaction evidence="2">
        <text>(3S)-hydroxyhexanoyl-CoA = (2E)-hexenoyl-CoA + H2O</text>
        <dbReference type="Rhea" id="RHEA:30547"/>
        <dbReference type="ChEBI" id="CHEBI:15377"/>
        <dbReference type="ChEBI" id="CHEBI:62075"/>
        <dbReference type="ChEBI" id="CHEBI:62077"/>
    </reaction>
    <physiologicalReaction direction="right-to-left" evidence="2">
        <dbReference type="Rhea" id="RHEA:30549"/>
    </physiologicalReaction>
</comment>
<comment type="catalytic activity">
    <reaction evidence="2">
        <text>(3S)-hydroxydecanoyl-CoA = (2E)-decenoyl-CoA + H2O</text>
        <dbReference type="Rhea" id="RHEA:31191"/>
        <dbReference type="ChEBI" id="CHEBI:15377"/>
        <dbReference type="ChEBI" id="CHEBI:61406"/>
        <dbReference type="ChEBI" id="CHEBI:62616"/>
    </reaction>
    <physiologicalReaction direction="right-to-left" evidence="2">
        <dbReference type="Rhea" id="RHEA:31193"/>
    </physiologicalReaction>
</comment>
<comment type="biophysicochemical properties">
    <kinetics>
        <KM evidence="10">12.75 uM for crotonyl-CoA ((2E)-butenoyl-CoA)</KM>
        <KM evidence="10">34.04 uM for acryloyl-CoA</KM>
        <KM evidence="10">45.83 uM for 3-Methylcrotonyl-CoA (3-methyl-(2E)-butenoyl-CoA)</KM>
        <KM evidence="10">57.87 uM for tiglyl-CoA (2-methylcrotonoyl-CoA)</KM>
        <Vmax evidence="10">54.64 umol/min/mg enzyme toward crotonyl-CoA</Vmax>
        <Vmax evidence="10">42.92 umol/min/mg enzyme toward acryloyl-CoA</Vmax>
        <Vmax evidence="10">49.02 umol/min/mg enzyme toward 3-Methylcrotonyl-CoA</Vmax>
        <Vmax evidence="10">6.66 umol/min/mg enzyme toward tiglyl-CoA</Vmax>
    </kinetics>
</comment>
<comment type="pathway">
    <text evidence="7 10">Lipid metabolism; fatty acid beta-oxidation.</text>
</comment>
<comment type="subunit">
    <text evidence="15">Homohexamer; dimer of trimers.</text>
</comment>
<comment type="interaction">
    <interactant intactId="EBI-719602">
        <id>P30084</id>
    </interactant>
    <interactant intactId="EBI-5323863">
        <id>Q5S007</id>
        <label>LRRK2</label>
    </interactant>
    <organismsDiffer>false</organismsDiffer>
    <experiments>4</experiments>
</comment>
<comment type="interaction">
    <interactant intactId="EBI-719602">
        <id>P30084</id>
    </interactant>
    <interactant intactId="EBI-518675">
        <id>P40763</id>
        <label>STAT3</label>
    </interactant>
    <organismsDiffer>false</organismsDiffer>
    <experiments>3</experiments>
</comment>
<comment type="interaction">
    <interactant intactId="EBI-719602">
        <id>P30084</id>
    </interactant>
    <interactant intactId="EBI-602878">
        <id>P42227</id>
        <label>Stat3</label>
    </interactant>
    <organismsDiffer>true</organismsDiffer>
    <experiments>3</experiments>
</comment>
<comment type="subcellular location">
    <subcellularLocation>
        <location>Mitochondrion matrix</location>
    </subcellularLocation>
</comment>
<comment type="tissue specificity">
    <text>Liver, fibroblast, muscle. Barely detectable in spleen and kidney.</text>
</comment>
<comment type="disease" evidence="7 8 9 10 11 12">
    <disease id="DI-04359">
        <name>Mitochondrial short-chain enoyl-CoA hydratase 1 deficiency</name>
        <acronym>ECHS1D</acronym>
        <description>A severe, autosomal recessive inborn error affecting valine metabolism. Disease features include brain lesions in the basal ganglia, neurodegeneration, delayed psychomotor development, hypotonia, spasticity, and increased lactic acid in serum and cerebral serum fluid.</description>
        <dbReference type="MIM" id="616277"/>
    </disease>
    <text>The disease is caused by variants affecting the gene represented in this entry.</text>
</comment>
<comment type="similarity">
    <text evidence="19">Belongs to the enoyl-CoA hydratase/isomerase family.</text>
</comment>